<accession>Q57CZ5</accession>
<feature type="chain" id="PRO_0000170018" description="LexA repressor">
    <location>
        <begin position="1"/>
        <end position="240"/>
    </location>
</feature>
<feature type="DNA-binding region" description="H-T-H motif" evidence="1">
    <location>
        <begin position="26"/>
        <end position="46"/>
    </location>
</feature>
<feature type="active site" description="For autocatalytic cleavage activity" evidence="1">
    <location>
        <position position="161"/>
    </location>
</feature>
<feature type="active site" description="For autocatalytic cleavage activity" evidence="1">
    <location>
        <position position="199"/>
    </location>
</feature>
<feature type="site" description="Cleavage; by autolysis" evidence="1">
    <location>
        <begin position="126"/>
        <end position="127"/>
    </location>
</feature>
<sequence>MLTRKQHELLLFIHERLKETGIPPSFDEMKEALDLASKSGIHRLITALEERGFIRRLPNRARALEVLRLPDSIAPGLSPQKKFAPSVIEGSLGKVASVQPVRPAPAPQNSEAPATVSVPVMGRIAAGVPISAIQNQTHMLSLPPEMIGAGEHYALEVKGDSMIDAGIFDGDTVIIKRGDTANPGEIVVALVDEEEATLKRFRREGASIALEAANPAYETRIFGPDRVHVQGKLVGLIRRY</sequence>
<comment type="function">
    <text evidence="1">Represses a number of genes involved in the response to DNA damage (SOS response), including recA and lexA. In the presence of single-stranded DNA, RecA interacts with LexA causing an autocatalytic cleavage which disrupts the DNA-binding part of LexA, leading to derepression of the SOS regulon and eventually DNA repair.</text>
</comment>
<comment type="catalytic activity">
    <reaction evidence="1">
        <text>Hydrolysis of Ala-|-Gly bond in repressor LexA.</text>
        <dbReference type="EC" id="3.4.21.88"/>
    </reaction>
</comment>
<comment type="subunit">
    <text evidence="1">Homodimer.</text>
</comment>
<comment type="similarity">
    <text evidence="1">Belongs to the peptidase S24 family.</text>
</comment>
<proteinExistence type="inferred from homology"/>
<protein>
    <recommendedName>
        <fullName evidence="1">LexA repressor</fullName>
        <ecNumber evidence="1">3.4.21.88</ecNumber>
    </recommendedName>
</protein>
<name>LEXA_BRUAB</name>
<keyword id="KW-0068">Autocatalytic cleavage</keyword>
<keyword id="KW-0227">DNA damage</keyword>
<keyword id="KW-0234">DNA repair</keyword>
<keyword id="KW-0235">DNA replication</keyword>
<keyword id="KW-0238">DNA-binding</keyword>
<keyword id="KW-0378">Hydrolase</keyword>
<keyword id="KW-0678">Repressor</keyword>
<keyword id="KW-0742">SOS response</keyword>
<keyword id="KW-0804">Transcription</keyword>
<keyword id="KW-0805">Transcription regulation</keyword>
<gene>
    <name evidence="1" type="primary">lexA</name>
    <name type="ordered locus">BruAb1_1150</name>
</gene>
<dbReference type="EC" id="3.4.21.88" evidence="1"/>
<dbReference type="EMBL" id="AE017223">
    <property type="protein sequence ID" value="AAX74489.1"/>
    <property type="molecule type" value="Genomic_DNA"/>
</dbReference>
<dbReference type="RefSeq" id="WP_002964272.1">
    <property type="nucleotide sequence ID" value="NC_006932.1"/>
</dbReference>
<dbReference type="SMR" id="Q57CZ5"/>
<dbReference type="MEROPS" id="S24.001"/>
<dbReference type="EnsemblBacteria" id="AAX74489">
    <property type="protein sequence ID" value="AAX74489"/>
    <property type="gene ID" value="BruAb1_1150"/>
</dbReference>
<dbReference type="GeneID" id="97533604"/>
<dbReference type="KEGG" id="bmb:BruAb1_1150"/>
<dbReference type="HOGENOM" id="CLU_066192_45_2_5"/>
<dbReference type="Proteomes" id="UP000000540">
    <property type="component" value="Chromosome I"/>
</dbReference>
<dbReference type="GO" id="GO:0003677">
    <property type="term" value="F:DNA binding"/>
    <property type="evidence" value="ECO:0007669"/>
    <property type="project" value="UniProtKB-UniRule"/>
</dbReference>
<dbReference type="GO" id="GO:0004252">
    <property type="term" value="F:serine-type endopeptidase activity"/>
    <property type="evidence" value="ECO:0007669"/>
    <property type="project" value="UniProtKB-UniRule"/>
</dbReference>
<dbReference type="GO" id="GO:0006281">
    <property type="term" value="P:DNA repair"/>
    <property type="evidence" value="ECO:0007669"/>
    <property type="project" value="UniProtKB-UniRule"/>
</dbReference>
<dbReference type="GO" id="GO:0006260">
    <property type="term" value="P:DNA replication"/>
    <property type="evidence" value="ECO:0007669"/>
    <property type="project" value="UniProtKB-UniRule"/>
</dbReference>
<dbReference type="GO" id="GO:0045892">
    <property type="term" value="P:negative regulation of DNA-templated transcription"/>
    <property type="evidence" value="ECO:0007669"/>
    <property type="project" value="UniProtKB-UniRule"/>
</dbReference>
<dbReference type="GO" id="GO:0006508">
    <property type="term" value="P:proteolysis"/>
    <property type="evidence" value="ECO:0007669"/>
    <property type="project" value="InterPro"/>
</dbReference>
<dbReference type="GO" id="GO:0009432">
    <property type="term" value="P:SOS response"/>
    <property type="evidence" value="ECO:0007669"/>
    <property type="project" value="UniProtKB-UniRule"/>
</dbReference>
<dbReference type="CDD" id="cd06529">
    <property type="entry name" value="S24_LexA-like"/>
    <property type="match status" value="1"/>
</dbReference>
<dbReference type="FunFam" id="1.10.10.10:FF:000102">
    <property type="entry name" value="LexA repressor"/>
    <property type="match status" value="1"/>
</dbReference>
<dbReference type="FunFam" id="2.10.109.10:FF:000001">
    <property type="entry name" value="LexA repressor"/>
    <property type="match status" value="1"/>
</dbReference>
<dbReference type="Gene3D" id="2.10.109.10">
    <property type="entry name" value="Umud Fragment, subunit A"/>
    <property type="match status" value="1"/>
</dbReference>
<dbReference type="Gene3D" id="1.10.10.10">
    <property type="entry name" value="Winged helix-like DNA-binding domain superfamily/Winged helix DNA-binding domain"/>
    <property type="match status" value="1"/>
</dbReference>
<dbReference type="HAMAP" id="MF_00015">
    <property type="entry name" value="LexA"/>
    <property type="match status" value="1"/>
</dbReference>
<dbReference type="InterPro" id="IPR006200">
    <property type="entry name" value="LexA"/>
</dbReference>
<dbReference type="InterPro" id="IPR039418">
    <property type="entry name" value="LexA-like"/>
</dbReference>
<dbReference type="InterPro" id="IPR036286">
    <property type="entry name" value="LexA/Signal_pep-like_sf"/>
</dbReference>
<dbReference type="InterPro" id="IPR006199">
    <property type="entry name" value="LexA_DNA-bd_dom"/>
</dbReference>
<dbReference type="InterPro" id="IPR050077">
    <property type="entry name" value="LexA_repressor"/>
</dbReference>
<dbReference type="InterPro" id="IPR006197">
    <property type="entry name" value="Peptidase_S24_LexA"/>
</dbReference>
<dbReference type="InterPro" id="IPR015927">
    <property type="entry name" value="Peptidase_S24_S26A/B/C"/>
</dbReference>
<dbReference type="InterPro" id="IPR036388">
    <property type="entry name" value="WH-like_DNA-bd_sf"/>
</dbReference>
<dbReference type="InterPro" id="IPR036390">
    <property type="entry name" value="WH_DNA-bd_sf"/>
</dbReference>
<dbReference type="NCBIfam" id="TIGR00498">
    <property type="entry name" value="lexA"/>
    <property type="match status" value="1"/>
</dbReference>
<dbReference type="PANTHER" id="PTHR33516">
    <property type="entry name" value="LEXA REPRESSOR"/>
    <property type="match status" value="1"/>
</dbReference>
<dbReference type="PANTHER" id="PTHR33516:SF2">
    <property type="entry name" value="LEXA REPRESSOR-RELATED"/>
    <property type="match status" value="1"/>
</dbReference>
<dbReference type="Pfam" id="PF01726">
    <property type="entry name" value="LexA_DNA_bind"/>
    <property type="match status" value="1"/>
</dbReference>
<dbReference type="Pfam" id="PF00717">
    <property type="entry name" value="Peptidase_S24"/>
    <property type="match status" value="1"/>
</dbReference>
<dbReference type="PRINTS" id="PR00726">
    <property type="entry name" value="LEXASERPTASE"/>
</dbReference>
<dbReference type="SUPFAM" id="SSF51306">
    <property type="entry name" value="LexA/Signal peptidase"/>
    <property type="match status" value="1"/>
</dbReference>
<dbReference type="SUPFAM" id="SSF46785">
    <property type="entry name" value="Winged helix' DNA-binding domain"/>
    <property type="match status" value="1"/>
</dbReference>
<evidence type="ECO:0000255" key="1">
    <source>
        <dbReference type="HAMAP-Rule" id="MF_00015"/>
    </source>
</evidence>
<reference key="1">
    <citation type="journal article" date="2005" name="J. Bacteriol.">
        <title>Completion of the genome sequence of Brucella abortus and comparison to the highly similar genomes of Brucella melitensis and Brucella suis.</title>
        <authorList>
            <person name="Halling S.M."/>
            <person name="Peterson-Burch B.D."/>
            <person name="Bricker B.J."/>
            <person name="Zuerner R.L."/>
            <person name="Qing Z."/>
            <person name="Li L.-L."/>
            <person name="Kapur V."/>
            <person name="Alt D.P."/>
            <person name="Olsen S.C."/>
        </authorList>
    </citation>
    <scope>NUCLEOTIDE SEQUENCE [LARGE SCALE GENOMIC DNA]</scope>
    <source>
        <strain>9-941</strain>
    </source>
</reference>
<organism>
    <name type="scientific">Brucella abortus biovar 1 (strain 9-941)</name>
    <dbReference type="NCBI Taxonomy" id="262698"/>
    <lineage>
        <taxon>Bacteria</taxon>
        <taxon>Pseudomonadati</taxon>
        <taxon>Pseudomonadota</taxon>
        <taxon>Alphaproteobacteria</taxon>
        <taxon>Hyphomicrobiales</taxon>
        <taxon>Brucellaceae</taxon>
        <taxon>Brucella/Ochrobactrum group</taxon>
        <taxon>Brucella</taxon>
    </lineage>
</organism>